<gene>
    <name evidence="1" type="primary">rplA</name>
    <name type="ordered locus">Acel_0296</name>
</gene>
<sequence length="239" mass="25900">MKRGKKYRAAAQLVDRTKLYSPLEAMRLAKQTNTMRVPATVEVAMRLGVDPRKADQMVRGTVNLPHGTGKTPRVLVFATAERAEEARAAGADYVGADELIEQVANGFLDFDAVVATPDLMGKVGRLGRILGPRGLMPNPKTGTVTNDVAKAVADIKSGKIEFRVDRQANLHLVIGKTDFTEQQLVENYAAALDEVLRLKPPTAKGRYLKKVTISTTMGPGIPVDPNRVRNLLAEETAAA</sequence>
<reference key="1">
    <citation type="journal article" date="2009" name="Genome Res.">
        <title>Complete genome of the cellulolytic thermophile Acidothermus cellulolyticus 11B provides insights into its ecophysiological and evolutionary adaptations.</title>
        <authorList>
            <person name="Barabote R.D."/>
            <person name="Xie G."/>
            <person name="Leu D.H."/>
            <person name="Normand P."/>
            <person name="Necsulea A."/>
            <person name="Daubin V."/>
            <person name="Medigue C."/>
            <person name="Adney W.S."/>
            <person name="Xu X.C."/>
            <person name="Lapidus A."/>
            <person name="Parales R.E."/>
            <person name="Detter C."/>
            <person name="Pujic P."/>
            <person name="Bruce D."/>
            <person name="Lavire C."/>
            <person name="Challacombe J.F."/>
            <person name="Brettin T.S."/>
            <person name="Berry A.M."/>
        </authorList>
    </citation>
    <scope>NUCLEOTIDE SEQUENCE [LARGE SCALE GENOMIC DNA]</scope>
    <source>
        <strain>ATCC 43068 / DSM 8971 / 11B</strain>
    </source>
</reference>
<proteinExistence type="inferred from homology"/>
<name>RL1_ACIC1</name>
<evidence type="ECO:0000255" key="1">
    <source>
        <dbReference type="HAMAP-Rule" id="MF_01318"/>
    </source>
</evidence>
<evidence type="ECO:0000305" key="2"/>
<keyword id="KW-1185">Reference proteome</keyword>
<keyword id="KW-0678">Repressor</keyword>
<keyword id="KW-0687">Ribonucleoprotein</keyword>
<keyword id="KW-0689">Ribosomal protein</keyword>
<keyword id="KW-0694">RNA-binding</keyword>
<keyword id="KW-0699">rRNA-binding</keyword>
<keyword id="KW-0810">Translation regulation</keyword>
<keyword id="KW-0820">tRNA-binding</keyword>
<dbReference type="EMBL" id="CP000481">
    <property type="protein sequence ID" value="ABK52070.1"/>
    <property type="molecule type" value="Genomic_DNA"/>
</dbReference>
<dbReference type="RefSeq" id="WP_011719133.1">
    <property type="nucleotide sequence ID" value="NC_008578.1"/>
</dbReference>
<dbReference type="SMR" id="A0LRL0"/>
<dbReference type="FunCoup" id="A0LRL0">
    <property type="interactions" value="296"/>
</dbReference>
<dbReference type="STRING" id="351607.Acel_0296"/>
<dbReference type="KEGG" id="ace:Acel_0296"/>
<dbReference type="eggNOG" id="COG0081">
    <property type="taxonomic scope" value="Bacteria"/>
</dbReference>
<dbReference type="HOGENOM" id="CLU_062853_0_0_11"/>
<dbReference type="InParanoid" id="A0LRL0"/>
<dbReference type="OrthoDB" id="9803740at2"/>
<dbReference type="Proteomes" id="UP000008221">
    <property type="component" value="Chromosome"/>
</dbReference>
<dbReference type="GO" id="GO:0015934">
    <property type="term" value="C:large ribosomal subunit"/>
    <property type="evidence" value="ECO:0007669"/>
    <property type="project" value="InterPro"/>
</dbReference>
<dbReference type="GO" id="GO:0019843">
    <property type="term" value="F:rRNA binding"/>
    <property type="evidence" value="ECO:0007669"/>
    <property type="project" value="UniProtKB-UniRule"/>
</dbReference>
<dbReference type="GO" id="GO:0003735">
    <property type="term" value="F:structural constituent of ribosome"/>
    <property type="evidence" value="ECO:0007669"/>
    <property type="project" value="InterPro"/>
</dbReference>
<dbReference type="GO" id="GO:0000049">
    <property type="term" value="F:tRNA binding"/>
    <property type="evidence" value="ECO:0007669"/>
    <property type="project" value="UniProtKB-KW"/>
</dbReference>
<dbReference type="GO" id="GO:0006417">
    <property type="term" value="P:regulation of translation"/>
    <property type="evidence" value="ECO:0007669"/>
    <property type="project" value="UniProtKB-KW"/>
</dbReference>
<dbReference type="GO" id="GO:0006412">
    <property type="term" value="P:translation"/>
    <property type="evidence" value="ECO:0007669"/>
    <property type="project" value="UniProtKB-UniRule"/>
</dbReference>
<dbReference type="CDD" id="cd00403">
    <property type="entry name" value="Ribosomal_L1"/>
    <property type="match status" value="1"/>
</dbReference>
<dbReference type="FunFam" id="3.40.50.790:FF:000001">
    <property type="entry name" value="50S ribosomal protein L1"/>
    <property type="match status" value="1"/>
</dbReference>
<dbReference type="Gene3D" id="3.30.190.20">
    <property type="match status" value="1"/>
</dbReference>
<dbReference type="Gene3D" id="3.40.50.790">
    <property type="match status" value="1"/>
</dbReference>
<dbReference type="HAMAP" id="MF_01318_B">
    <property type="entry name" value="Ribosomal_uL1_B"/>
    <property type="match status" value="1"/>
</dbReference>
<dbReference type="InterPro" id="IPR005878">
    <property type="entry name" value="Ribosom_uL1_bac-type"/>
</dbReference>
<dbReference type="InterPro" id="IPR002143">
    <property type="entry name" value="Ribosomal_uL1"/>
</dbReference>
<dbReference type="InterPro" id="IPR023674">
    <property type="entry name" value="Ribosomal_uL1-like"/>
</dbReference>
<dbReference type="InterPro" id="IPR028364">
    <property type="entry name" value="Ribosomal_uL1/biogenesis"/>
</dbReference>
<dbReference type="InterPro" id="IPR016095">
    <property type="entry name" value="Ribosomal_uL1_3-a/b-sand"/>
</dbReference>
<dbReference type="InterPro" id="IPR023673">
    <property type="entry name" value="Ribosomal_uL1_CS"/>
</dbReference>
<dbReference type="NCBIfam" id="TIGR01169">
    <property type="entry name" value="rplA_bact"/>
    <property type="match status" value="1"/>
</dbReference>
<dbReference type="PANTHER" id="PTHR36427">
    <property type="entry name" value="54S RIBOSOMAL PROTEIN L1, MITOCHONDRIAL"/>
    <property type="match status" value="1"/>
</dbReference>
<dbReference type="PANTHER" id="PTHR36427:SF3">
    <property type="entry name" value="LARGE RIBOSOMAL SUBUNIT PROTEIN UL1M"/>
    <property type="match status" value="1"/>
</dbReference>
<dbReference type="Pfam" id="PF00687">
    <property type="entry name" value="Ribosomal_L1"/>
    <property type="match status" value="1"/>
</dbReference>
<dbReference type="PIRSF" id="PIRSF002155">
    <property type="entry name" value="Ribosomal_L1"/>
    <property type="match status" value="1"/>
</dbReference>
<dbReference type="SUPFAM" id="SSF56808">
    <property type="entry name" value="Ribosomal protein L1"/>
    <property type="match status" value="1"/>
</dbReference>
<dbReference type="PROSITE" id="PS01199">
    <property type="entry name" value="RIBOSOMAL_L1"/>
    <property type="match status" value="1"/>
</dbReference>
<accession>A0LRL0</accession>
<comment type="function">
    <text evidence="1">Binds directly to 23S rRNA. The L1 stalk is quite mobile in the ribosome, and is involved in E site tRNA release.</text>
</comment>
<comment type="function">
    <text evidence="1">Protein L1 is also a translational repressor protein, it controls the translation of the L11 operon by binding to its mRNA.</text>
</comment>
<comment type="subunit">
    <text evidence="1">Part of the 50S ribosomal subunit.</text>
</comment>
<comment type="similarity">
    <text evidence="1">Belongs to the universal ribosomal protein uL1 family.</text>
</comment>
<feature type="chain" id="PRO_0000307949" description="Large ribosomal subunit protein uL1">
    <location>
        <begin position="1"/>
        <end position="239"/>
    </location>
</feature>
<organism>
    <name type="scientific">Acidothermus cellulolyticus (strain ATCC 43068 / DSM 8971 / 11B)</name>
    <dbReference type="NCBI Taxonomy" id="351607"/>
    <lineage>
        <taxon>Bacteria</taxon>
        <taxon>Bacillati</taxon>
        <taxon>Actinomycetota</taxon>
        <taxon>Actinomycetes</taxon>
        <taxon>Acidothermales</taxon>
        <taxon>Acidothermaceae</taxon>
        <taxon>Acidothermus</taxon>
    </lineage>
</organism>
<protein>
    <recommendedName>
        <fullName evidence="1">Large ribosomal subunit protein uL1</fullName>
    </recommendedName>
    <alternativeName>
        <fullName evidence="2">50S ribosomal protein L1</fullName>
    </alternativeName>
</protein>